<comment type="miscellaneous">
    <text>This gamma chain was obtained from antibody to type III pneumococci and was isolated from the serum of a single rabbit.</text>
</comment>
<accession>P01826</accession>
<evidence type="ECO:0000269" key="1">
    <source>
    </source>
</evidence>
<protein>
    <recommendedName>
        <fullName>Ig heavy chain V-A1 region BS-5</fullName>
    </recommendedName>
</protein>
<name>HV1A_RABIT</name>
<organism>
    <name type="scientific">Oryctolagus cuniculus</name>
    <name type="common">Rabbit</name>
    <dbReference type="NCBI Taxonomy" id="9986"/>
    <lineage>
        <taxon>Eukaryota</taxon>
        <taxon>Metazoa</taxon>
        <taxon>Chordata</taxon>
        <taxon>Craniata</taxon>
        <taxon>Vertebrata</taxon>
        <taxon>Euteleostomi</taxon>
        <taxon>Mammalia</taxon>
        <taxon>Eutheria</taxon>
        <taxon>Euarchontoglires</taxon>
        <taxon>Glires</taxon>
        <taxon>Lagomorpha</taxon>
        <taxon>Leporidae</taxon>
        <taxon>Oryctolagus</taxon>
    </lineage>
</organism>
<sequence>QSVEESGGRLVTPTPGLTLTCTVSGFSLSSYDMGWVRQAPGKGLEWIGIIYASGSTYYASWAKGRFTISKTSTTVDLKTSLPTEDTATYFCARQGTGLVHLAFVDVWGPGTLVTVS</sequence>
<reference key="1">
    <citation type="journal article" date="1972" name="Biochem. J.">
        <title>Amino acid sequence of the N-terminal sixty-nine residues of heavy chain derived from a homogeneous rabbit antibody.</title>
        <authorList>
            <person name="Jaton J.-C."/>
            <person name="Braun D.G."/>
        </authorList>
    </citation>
    <scope>PROTEIN SEQUENCE OF 1-69</scope>
    <scope>PYROGLUTAMATE FORMATION AT GLN-1</scope>
</reference>
<reference key="2">
    <citation type="journal article" date="1974" name="Biochem. J.">
        <title>Completion of the analysis of the primary structure of the variable domain of a homogeneous rabbit antibody to type III pneumococcal polysaccharide.</title>
        <authorList>
            <person name="Jaton J.-C."/>
        </authorList>
    </citation>
    <scope>PROTEIN SEQUENCE OF 64-116</scope>
</reference>
<keyword id="KW-1064">Adaptive immunity</keyword>
<keyword id="KW-0903">Direct protein sequencing</keyword>
<keyword id="KW-0391">Immunity</keyword>
<keyword id="KW-1280">Immunoglobulin</keyword>
<keyword id="KW-0873">Pyrrolidone carboxylic acid</keyword>
<keyword id="KW-1185">Reference proteome</keyword>
<dbReference type="PIR" id="A90264">
    <property type="entry name" value="GARB15"/>
</dbReference>
<dbReference type="SMR" id="P01826"/>
<dbReference type="FunCoup" id="P01826">
    <property type="interactions" value="255"/>
</dbReference>
<dbReference type="STRING" id="9986.ENSOCUP00000016179"/>
<dbReference type="InParanoid" id="P01826"/>
<dbReference type="Proteomes" id="UP000001811">
    <property type="component" value="Unplaced"/>
</dbReference>
<dbReference type="GO" id="GO:0005576">
    <property type="term" value="C:extracellular region"/>
    <property type="evidence" value="ECO:0007669"/>
    <property type="project" value="UniProtKB-ARBA"/>
</dbReference>
<dbReference type="GO" id="GO:0019814">
    <property type="term" value="C:immunoglobulin complex"/>
    <property type="evidence" value="ECO:0007669"/>
    <property type="project" value="UniProtKB-KW"/>
</dbReference>
<dbReference type="GO" id="GO:0002250">
    <property type="term" value="P:adaptive immune response"/>
    <property type="evidence" value="ECO:0007669"/>
    <property type="project" value="UniProtKB-KW"/>
</dbReference>
<dbReference type="FunFam" id="2.60.40.10:FF:001878">
    <property type="entry name" value="Immunoglobulin heavy variable 1-4"/>
    <property type="match status" value="1"/>
</dbReference>
<dbReference type="Gene3D" id="2.60.40.10">
    <property type="entry name" value="Immunoglobulins"/>
    <property type="match status" value="1"/>
</dbReference>
<dbReference type="InterPro" id="IPR007110">
    <property type="entry name" value="Ig-like_dom"/>
</dbReference>
<dbReference type="InterPro" id="IPR036179">
    <property type="entry name" value="Ig-like_dom_sf"/>
</dbReference>
<dbReference type="InterPro" id="IPR013783">
    <property type="entry name" value="Ig-like_fold"/>
</dbReference>
<dbReference type="InterPro" id="IPR013106">
    <property type="entry name" value="Ig_V-set"/>
</dbReference>
<dbReference type="InterPro" id="IPR050199">
    <property type="entry name" value="IgHV"/>
</dbReference>
<dbReference type="PANTHER" id="PTHR23266">
    <property type="entry name" value="IMMUNOGLOBULIN HEAVY CHAIN"/>
    <property type="match status" value="1"/>
</dbReference>
<dbReference type="Pfam" id="PF07686">
    <property type="entry name" value="V-set"/>
    <property type="match status" value="1"/>
</dbReference>
<dbReference type="SMART" id="SM00406">
    <property type="entry name" value="IGv"/>
    <property type="match status" value="1"/>
</dbReference>
<dbReference type="SUPFAM" id="SSF48726">
    <property type="entry name" value="Immunoglobulin"/>
    <property type="match status" value="1"/>
</dbReference>
<dbReference type="PROSITE" id="PS50835">
    <property type="entry name" value="IG_LIKE"/>
    <property type="match status" value="1"/>
</dbReference>
<proteinExistence type="evidence at protein level"/>
<feature type="chain" id="PRO_0000059935" description="Ig heavy chain V-A1 region BS-5">
    <location>
        <begin position="1"/>
        <end position="116" status="greater than"/>
    </location>
</feature>
<feature type="domain" description="Ig-like">
    <location>
        <begin position="1"/>
        <end position="107"/>
    </location>
</feature>
<feature type="modified residue" description="Pyrrolidone carboxylic acid" evidence="1">
    <location>
        <position position="1"/>
    </location>
</feature>
<feature type="non-terminal residue">
    <location>
        <position position="116"/>
    </location>
</feature>